<name>SPH6_ARATH</name>
<protein>
    <recommendedName>
        <fullName evidence="3">S-protein homolog 6</fullName>
    </recommendedName>
</protein>
<feature type="signal peptide" evidence="1">
    <location>
        <begin position="1"/>
        <end position="17"/>
    </location>
</feature>
<feature type="chain" id="PRO_0000439571" description="S-protein homolog 6">
    <location>
        <begin position="18"/>
        <end position="136"/>
    </location>
</feature>
<feature type="glycosylation site" description="N-linked (GlcNAc...) asparagine" evidence="2">
    <location>
        <position position="76"/>
    </location>
</feature>
<feature type="glycosylation site" description="N-linked (GlcNAc...) asparagine" evidence="2">
    <location>
        <position position="108"/>
    </location>
</feature>
<sequence length="136" mass="15887">MFIIIFIVLISLIGCETLQHDGKVFPMKGPLTRVVIYNDNDYLLGVHCKSRDDDHGFHILQKGGLYGWMFYVNFMNSTLYFCGFSQEQVKKGVFDIYKAVRDSSRCRNCTWEAKEDGIYGYGEIPKKNPLFYKWLM</sequence>
<reference key="1">
    <citation type="submission" date="2011-03" db="EMBL/GenBank/DDBJ databases">
        <title>SPH: a novel family of secreted proteins with members implicated in plant defense regulation and development.</title>
        <authorList>
            <person name="Wheeler M.J."/>
            <person name="Bell E.M."/>
            <person name="Holub E.B."/>
            <person name="Ride J."/>
            <person name="Franklin-Tong V.E."/>
            <person name="Franklin F.H."/>
        </authorList>
    </citation>
    <scope>NUCLEOTIDE SEQUENCE [GENOMIC DNA]</scope>
    <source>
        <strain>cv. Columbia</strain>
    </source>
</reference>
<reference key="2">
    <citation type="journal article" date="1997" name="DNA Res.">
        <title>Structural analysis of Arabidopsis thaliana chromosome 5. I. Sequence features of the 1.6 Mb regions covered by twenty physically assigned P1 clones.</title>
        <authorList>
            <person name="Sato S."/>
            <person name="Kotani H."/>
            <person name="Nakamura Y."/>
            <person name="Kaneko T."/>
            <person name="Asamizu E."/>
            <person name="Fukami M."/>
            <person name="Miyajima N."/>
            <person name="Tabata S."/>
        </authorList>
    </citation>
    <scope>NUCLEOTIDE SEQUENCE [LARGE SCALE GENOMIC DNA]</scope>
    <source>
        <strain>cv. Columbia</strain>
    </source>
</reference>
<reference key="3">
    <citation type="journal article" date="2017" name="Plant J.">
        <title>Araport11: a complete reannotation of the Arabidopsis thaliana reference genome.</title>
        <authorList>
            <person name="Cheng C.Y."/>
            <person name="Krishnakumar V."/>
            <person name="Chan A.P."/>
            <person name="Thibaud-Nissen F."/>
            <person name="Schobel S."/>
            <person name="Town C.D."/>
        </authorList>
    </citation>
    <scope>GENOME REANNOTATION</scope>
    <source>
        <strain>cv. Columbia</strain>
    </source>
</reference>
<reference key="4">
    <citation type="journal article" date="1999" name="Plant Mol. Biol.">
        <title>Analysis of Arabidopsis genome sequence reveals a large new gene family in plants.</title>
        <authorList>
            <person name="Ride J.P."/>
            <person name="Davies E.M."/>
            <person name="Franklin F.C.H."/>
            <person name="Marshall D.F."/>
        </authorList>
    </citation>
    <scope>GENE FAMILY</scope>
    <scope>NOMENCLATURE</scope>
    <source>
        <strain>cv. Columbia</strain>
    </source>
</reference>
<accession>F2Q9V4</accession>
<proteinExistence type="inferred from homology"/>
<keyword id="KW-0325">Glycoprotein</keyword>
<keyword id="KW-1185">Reference proteome</keyword>
<keyword id="KW-0964">Secreted</keyword>
<keyword id="KW-0713">Self-incompatibility</keyword>
<keyword id="KW-0732">Signal</keyword>
<comment type="subcellular location">
    <subcellularLocation>
        <location evidence="5">Secreted</location>
    </subcellularLocation>
</comment>
<comment type="similarity">
    <text evidence="4">Belongs to the plant self-incompatibility (S1) protein family.</text>
</comment>
<comment type="sequence caution" evidence="4">
    <conflict type="erroneous initiation">
        <sequence resource="EMBL-CDS" id="CBL42999"/>
    </conflict>
    <text>Extended N-terminus.</text>
</comment>
<organism>
    <name type="scientific">Arabidopsis thaliana</name>
    <name type="common">Mouse-ear cress</name>
    <dbReference type="NCBI Taxonomy" id="3702"/>
    <lineage>
        <taxon>Eukaryota</taxon>
        <taxon>Viridiplantae</taxon>
        <taxon>Streptophyta</taxon>
        <taxon>Embryophyta</taxon>
        <taxon>Tracheophyta</taxon>
        <taxon>Spermatophyta</taxon>
        <taxon>Magnoliopsida</taxon>
        <taxon>eudicotyledons</taxon>
        <taxon>Gunneridae</taxon>
        <taxon>Pentapetalae</taxon>
        <taxon>rosids</taxon>
        <taxon>malvids</taxon>
        <taxon>Brassicales</taxon>
        <taxon>Brassicaceae</taxon>
        <taxon>Camelineae</taxon>
        <taxon>Arabidopsis</taxon>
    </lineage>
</organism>
<evidence type="ECO:0000255" key="1"/>
<evidence type="ECO:0000255" key="2">
    <source>
        <dbReference type="PROSITE-ProRule" id="PRU00498"/>
    </source>
</evidence>
<evidence type="ECO:0000303" key="3">
    <source>
    </source>
</evidence>
<evidence type="ECO:0000305" key="4"/>
<evidence type="ECO:0000305" key="5">
    <source>
    </source>
</evidence>
<dbReference type="EMBL" id="FN691474">
    <property type="protein sequence ID" value="CBL42999.1"/>
    <property type="status" value="ALT_INIT"/>
    <property type="molecule type" value="Genomic_DNA"/>
</dbReference>
<dbReference type="EMBL" id="AB005237">
    <property type="status" value="NOT_ANNOTATED_CDS"/>
    <property type="molecule type" value="Genomic_DNA"/>
</dbReference>
<dbReference type="EMBL" id="CP002688">
    <property type="status" value="NOT_ANNOTATED_CDS"/>
    <property type="molecule type" value="Genomic_DNA"/>
</dbReference>
<dbReference type="SMR" id="F2Q9V4"/>
<dbReference type="STRING" id="3702.F2Q9V4"/>
<dbReference type="GlyCosmos" id="F2Q9V4">
    <property type="glycosylation" value="2 sites, No reported glycans"/>
</dbReference>
<dbReference type="GlyGen" id="F2Q9V4">
    <property type="glycosylation" value="2 sites"/>
</dbReference>
<dbReference type="Araport" id="AT5G05825"/>
<dbReference type="TAIR" id="AT5G05825"/>
<dbReference type="InParanoid" id="F2Q9V4"/>
<dbReference type="PRO" id="PR:F2Q9V4"/>
<dbReference type="Proteomes" id="UP000006548">
    <property type="component" value="Chromosome 5"/>
</dbReference>
<dbReference type="ExpressionAtlas" id="F2Q9V4">
    <property type="expression patterns" value="baseline and differential"/>
</dbReference>
<dbReference type="GO" id="GO:0005576">
    <property type="term" value="C:extracellular region"/>
    <property type="evidence" value="ECO:0007669"/>
    <property type="project" value="UniProtKB-SubCell"/>
</dbReference>
<dbReference type="GO" id="GO:0060320">
    <property type="term" value="P:rejection of self pollen"/>
    <property type="evidence" value="ECO:0007669"/>
    <property type="project" value="UniProtKB-KW"/>
</dbReference>
<dbReference type="InterPro" id="IPR010264">
    <property type="entry name" value="Self-incomp_S1"/>
</dbReference>
<dbReference type="PANTHER" id="PTHR31232">
    <property type="match status" value="1"/>
</dbReference>
<dbReference type="PANTHER" id="PTHR31232:SF168">
    <property type="entry name" value="S-PROTEIN HOMOLOG 24-RELATED"/>
    <property type="match status" value="1"/>
</dbReference>
<dbReference type="Pfam" id="PF05938">
    <property type="entry name" value="Self-incomp_S1"/>
    <property type="match status" value="1"/>
</dbReference>
<gene>
    <name evidence="3" type="primary">SPH6</name>
    <name evidence="4" type="ordered locus">At5g05825</name>
    <name evidence="4" type="ORF">MJJ3</name>
</gene>